<organism>
    <name type="scientific">Nicotiana tabacum</name>
    <name type="common">Common tobacco</name>
    <dbReference type="NCBI Taxonomy" id="4097"/>
    <lineage>
        <taxon>Eukaryota</taxon>
        <taxon>Viridiplantae</taxon>
        <taxon>Streptophyta</taxon>
        <taxon>Embryophyta</taxon>
        <taxon>Tracheophyta</taxon>
        <taxon>Spermatophyta</taxon>
        <taxon>Magnoliopsida</taxon>
        <taxon>eudicotyledons</taxon>
        <taxon>Gunneridae</taxon>
        <taxon>Pentapetalae</taxon>
        <taxon>asterids</taxon>
        <taxon>lamiids</taxon>
        <taxon>Solanales</taxon>
        <taxon>Solanaceae</taxon>
        <taxon>Nicotianoideae</taxon>
        <taxon>Nicotianeae</taxon>
        <taxon>Nicotiana</taxon>
    </lineage>
</organism>
<name>DCUP_TOBAC</name>
<accession>Q42967</accession>
<evidence type="ECO:0000250" key="1"/>
<evidence type="ECO:0000255" key="2"/>
<evidence type="ECO:0000269" key="3">
    <source>
    </source>
</evidence>
<evidence type="ECO:0000305" key="4"/>
<evidence type="ECO:0007829" key="5">
    <source>
        <dbReference type="PDB" id="1J93"/>
    </source>
</evidence>
<protein>
    <recommendedName>
        <fullName>Uroporphyrinogen decarboxylase, chloroplastic</fullName>
        <shortName>UPD</shortName>
        <shortName>URO-D</shortName>
        <ecNumber>4.1.1.37</ecNumber>
    </recommendedName>
</protein>
<keyword id="KW-0002">3D-structure</keyword>
<keyword id="KW-0149">Chlorophyll biosynthesis</keyword>
<keyword id="KW-0150">Chloroplast</keyword>
<keyword id="KW-0210">Decarboxylase</keyword>
<keyword id="KW-0456">Lyase</keyword>
<keyword id="KW-0934">Plastid</keyword>
<keyword id="KW-0627">Porphyrin biosynthesis</keyword>
<keyword id="KW-1185">Reference proteome</keyword>
<keyword id="KW-0809">Transit peptide</keyword>
<proteinExistence type="evidence at protein level"/>
<gene>
    <name type="primary">DCUP</name>
</gene>
<dbReference type="EC" id="4.1.1.37"/>
<dbReference type="EMBL" id="X82833">
    <property type="protein sequence ID" value="CAA58040.1"/>
    <property type="molecule type" value="mRNA"/>
</dbReference>
<dbReference type="PIR" id="S55732">
    <property type="entry name" value="S55732"/>
</dbReference>
<dbReference type="RefSeq" id="NP_001312840.1">
    <property type="nucleotide sequence ID" value="NM_001325911.1"/>
</dbReference>
<dbReference type="PDB" id="1J93">
    <property type="method" value="X-ray"/>
    <property type="resolution" value="2.30 A"/>
    <property type="chains" value="A=39-391"/>
</dbReference>
<dbReference type="PDBsum" id="1J93"/>
<dbReference type="SMR" id="Q42967"/>
<dbReference type="STRING" id="4097.Q42967"/>
<dbReference type="PaxDb" id="4097-Q42967"/>
<dbReference type="ProMEX" id="Q42967"/>
<dbReference type="GeneID" id="107813684"/>
<dbReference type="KEGG" id="nta:107813684"/>
<dbReference type="OrthoDB" id="339900at2759"/>
<dbReference type="BioCyc" id="MetaCyc:MONOMER-11784"/>
<dbReference type="UniPathway" id="UPA00251">
    <property type="reaction ID" value="UER00321"/>
</dbReference>
<dbReference type="EvolutionaryTrace" id="Q42967"/>
<dbReference type="Proteomes" id="UP000084051">
    <property type="component" value="Unplaced"/>
</dbReference>
<dbReference type="GO" id="GO:0009507">
    <property type="term" value="C:chloroplast"/>
    <property type="evidence" value="ECO:0007669"/>
    <property type="project" value="UniProtKB-SubCell"/>
</dbReference>
<dbReference type="GO" id="GO:0004853">
    <property type="term" value="F:uroporphyrinogen decarboxylase activity"/>
    <property type="evidence" value="ECO:0007669"/>
    <property type="project" value="UniProtKB-EC"/>
</dbReference>
<dbReference type="GO" id="GO:0015995">
    <property type="term" value="P:chlorophyll biosynthetic process"/>
    <property type="evidence" value="ECO:0007669"/>
    <property type="project" value="UniProtKB-KW"/>
</dbReference>
<dbReference type="GO" id="GO:0006782">
    <property type="term" value="P:protoporphyrinogen IX biosynthetic process"/>
    <property type="evidence" value="ECO:0007669"/>
    <property type="project" value="UniProtKB-UniPathway"/>
</dbReference>
<dbReference type="CDD" id="cd00717">
    <property type="entry name" value="URO-D"/>
    <property type="match status" value="1"/>
</dbReference>
<dbReference type="FunFam" id="3.20.20.210:FF:000006">
    <property type="entry name" value="Uroporphyrinogen decarboxylase"/>
    <property type="match status" value="1"/>
</dbReference>
<dbReference type="Gene3D" id="3.20.20.210">
    <property type="match status" value="1"/>
</dbReference>
<dbReference type="HAMAP" id="MF_00218">
    <property type="entry name" value="URO_D"/>
    <property type="match status" value="1"/>
</dbReference>
<dbReference type="InterPro" id="IPR038071">
    <property type="entry name" value="UROD/MetE-like_sf"/>
</dbReference>
<dbReference type="InterPro" id="IPR006361">
    <property type="entry name" value="Uroporphyrinogen_deCO2ase_HemE"/>
</dbReference>
<dbReference type="InterPro" id="IPR000257">
    <property type="entry name" value="Uroporphyrinogen_deCOase"/>
</dbReference>
<dbReference type="NCBIfam" id="TIGR01464">
    <property type="entry name" value="hemE"/>
    <property type="match status" value="1"/>
</dbReference>
<dbReference type="PANTHER" id="PTHR21091">
    <property type="entry name" value="METHYLTETRAHYDROFOLATE:HOMOCYSTEINE METHYLTRANSFERASE RELATED"/>
    <property type="match status" value="1"/>
</dbReference>
<dbReference type="PANTHER" id="PTHR21091:SF169">
    <property type="entry name" value="UROPORPHYRINOGEN DECARBOXYLASE"/>
    <property type="match status" value="1"/>
</dbReference>
<dbReference type="Pfam" id="PF01208">
    <property type="entry name" value="URO-D"/>
    <property type="match status" value="1"/>
</dbReference>
<dbReference type="SUPFAM" id="SSF51726">
    <property type="entry name" value="UROD/MetE-like"/>
    <property type="match status" value="1"/>
</dbReference>
<dbReference type="PROSITE" id="PS00906">
    <property type="entry name" value="UROD_1"/>
    <property type="match status" value="1"/>
</dbReference>
<dbReference type="PROSITE" id="PS00907">
    <property type="entry name" value="UROD_2"/>
    <property type="match status" value="1"/>
</dbReference>
<reference key="1">
    <citation type="journal article" date="1995" name="Plant Mol. Biol.">
        <title>Isolation, sequencing and expression of cDNA sequences encoding uroporphyrinogen decarboxylase from tobacco and barley.</title>
        <authorList>
            <person name="Mock H.-P."/>
            <person name="Trainotti L."/>
            <person name="Kruse E."/>
            <person name="Grimm B."/>
        </authorList>
    </citation>
    <scope>NUCLEOTIDE SEQUENCE [MRNA]</scope>
    <source>
        <strain>cv. SR1</strain>
        <tissue>Leaf</tissue>
    </source>
</reference>
<reference key="2">
    <citation type="journal article" date="2001" name="J. Biol. Chem.">
        <title>Crystal structure and substrate binding modeling of the uroporphyrinogen-III decarboxylase from Nicotiana tabacum. Implications for the catalytic mechanism.</title>
        <authorList>
            <person name="Martins B.M."/>
            <person name="Grimm B."/>
            <person name="Mock H.-P."/>
            <person name="Huber R."/>
            <person name="Messerschmidt A."/>
        </authorList>
    </citation>
    <scope>X-RAY CRYSTALLOGRAPHY (2.3 ANGSTROMS) OF 39-391</scope>
    <scope>SUBUNIT</scope>
    <scope>REACTION MECHANISM</scope>
</reference>
<feature type="transit peptide" description="Chloroplast" evidence="2">
    <location>
        <begin position="1"/>
        <end status="unknown"/>
    </location>
</feature>
<feature type="chain" id="PRO_0000036331" description="Uroporphyrinogen decarboxylase, chloroplastic">
    <location>
        <begin status="unknown"/>
        <end position="391"/>
    </location>
</feature>
<feature type="binding site" evidence="1">
    <location>
        <begin position="71"/>
        <end position="75"/>
    </location>
    <ligand>
        <name>substrate</name>
    </ligand>
</feature>
<feature type="binding site" evidence="1">
    <location>
        <position position="90"/>
    </location>
    <ligand>
        <name>substrate</name>
    </ligand>
</feature>
<feature type="binding site" evidence="1">
    <location>
        <position position="120"/>
    </location>
    <ligand>
        <name>substrate</name>
    </ligand>
</feature>
<feature type="binding site" evidence="1">
    <location>
        <position position="121"/>
    </location>
    <ligand>
        <name>substrate</name>
    </ligand>
</feature>
<feature type="binding site" evidence="1">
    <location>
        <position position="198"/>
    </location>
    <ligand>
        <name>substrate</name>
    </ligand>
</feature>
<feature type="binding site" evidence="1">
    <location>
        <position position="253"/>
    </location>
    <ligand>
        <name>substrate</name>
    </ligand>
</feature>
<feature type="binding site" evidence="1">
    <location>
        <position position="368"/>
    </location>
    <ligand>
        <name>substrate</name>
    </ligand>
</feature>
<feature type="site" description="Transition state stabilizer" evidence="1">
    <location>
        <position position="121"/>
    </location>
</feature>
<feature type="helix" evidence="5">
    <location>
        <begin position="52"/>
        <end position="58"/>
    </location>
</feature>
<feature type="turn" evidence="5">
    <location>
        <begin position="74"/>
        <end position="76"/>
    </location>
</feature>
<feature type="helix" evidence="5">
    <location>
        <begin position="79"/>
        <end position="85"/>
    </location>
</feature>
<feature type="turn" evidence="5">
    <location>
        <begin position="90"/>
        <end position="95"/>
    </location>
</feature>
<feature type="helix" evidence="5">
    <location>
        <begin position="97"/>
        <end position="111"/>
    </location>
</feature>
<feature type="strand" evidence="5">
    <location>
        <begin position="114"/>
        <end position="117"/>
    </location>
</feature>
<feature type="helix" evidence="5">
    <location>
        <begin position="124"/>
        <end position="129"/>
    </location>
</feature>
<feature type="strand" evidence="5">
    <location>
        <begin position="133"/>
        <end position="136"/>
    </location>
</feature>
<feature type="turn" evidence="5">
    <location>
        <begin position="137"/>
        <end position="139"/>
    </location>
</feature>
<feature type="strand" evidence="5">
    <location>
        <begin position="140"/>
        <end position="145"/>
    </location>
</feature>
<feature type="helix" evidence="5">
    <location>
        <begin position="150"/>
        <end position="155"/>
    </location>
</feature>
<feature type="helix" evidence="5">
    <location>
        <begin position="161"/>
        <end position="164"/>
    </location>
</feature>
<feature type="helix" evidence="5">
    <location>
        <begin position="166"/>
        <end position="179"/>
    </location>
</feature>
<feature type="strand" evidence="5">
    <location>
        <begin position="182"/>
        <end position="190"/>
    </location>
</feature>
<feature type="helix" evidence="5">
    <location>
        <begin position="192"/>
        <end position="201"/>
    </location>
</feature>
<feature type="helix" evidence="5">
    <location>
        <begin position="209"/>
        <end position="217"/>
    </location>
</feature>
<feature type="helix" evidence="5">
    <location>
        <begin position="219"/>
        <end position="242"/>
    </location>
</feature>
<feature type="strand" evidence="5">
    <location>
        <begin position="246"/>
        <end position="251"/>
    </location>
</feature>
<feature type="helix" evidence="5">
    <location>
        <begin position="253"/>
        <end position="257"/>
    </location>
</feature>
<feature type="helix" evidence="5">
    <location>
        <begin position="260"/>
        <end position="266"/>
    </location>
</feature>
<feature type="helix" evidence="5">
    <location>
        <begin position="268"/>
        <end position="281"/>
    </location>
</feature>
<feature type="strand" evidence="5">
    <location>
        <begin position="287"/>
        <end position="290"/>
    </location>
</feature>
<feature type="turn" evidence="5">
    <location>
        <begin position="295"/>
        <end position="297"/>
    </location>
</feature>
<feature type="helix" evidence="5">
    <location>
        <begin position="298"/>
        <end position="304"/>
    </location>
</feature>
<feature type="strand" evidence="5">
    <location>
        <begin position="307"/>
        <end position="310"/>
    </location>
</feature>
<feature type="helix" evidence="5">
    <location>
        <begin position="317"/>
        <end position="323"/>
    </location>
</feature>
<feature type="strand" evidence="5">
    <location>
        <begin position="326"/>
        <end position="331"/>
    </location>
</feature>
<feature type="helix" evidence="5">
    <location>
        <begin position="336"/>
        <end position="340"/>
    </location>
</feature>
<feature type="helix" evidence="5">
    <location>
        <begin position="343"/>
        <end position="357"/>
    </location>
</feature>
<feature type="strand" evidence="5">
    <location>
        <begin position="359"/>
        <end position="364"/>
    </location>
</feature>
<feature type="strand" evidence="5">
    <location>
        <begin position="366"/>
        <end position="368"/>
    </location>
</feature>
<feature type="helix" evidence="5">
    <location>
        <begin position="376"/>
        <end position="387"/>
    </location>
</feature>
<sequence length="391" mass="43116">MMSCNYSFSSISPSSKSAFTSPSNFNLNPRLICCSAGGTVAEPKAINATQPLLLDAVRGKEVERPPVWLMRQAGRYMKSYQLLCEKYPLFRDRSENVDLVVEISLQPWKVFRPDGVILFSDILTPLSGMNIPFDIIKGKGPVIFDPLRTAADVEKVREFIPEKSVPYVGEALTILRKEVNNQAAVLGFVGAPFTLASYVVEGGSSKNFTKIKRLAFAEPKVLHALLQKFATSMAKYIRYQADSGAQAVQIFDSWATELSPVDFEEFSLPYLKQIVDSVKLTHPNLPLILYASGSGGLLERLPLTGVDVVSLDWTVDMADGRRRLGPNVAIQGNVDPGVLFGSKEFITNRINDTVKKAGKGKHILNLGHGIKVGTPEENFAHFFEIAKGLRY</sequence>
<comment type="function">
    <text>Catalyzes the decarboxylation of four acetate groups of uroporphyrinogen-III to yield coproporphyrinogen-III.</text>
</comment>
<comment type="catalytic activity">
    <reaction>
        <text>uroporphyrinogen III + 4 H(+) = coproporphyrinogen III + 4 CO2</text>
        <dbReference type="Rhea" id="RHEA:19865"/>
        <dbReference type="ChEBI" id="CHEBI:15378"/>
        <dbReference type="ChEBI" id="CHEBI:16526"/>
        <dbReference type="ChEBI" id="CHEBI:57308"/>
        <dbReference type="ChEBI" id="CHEBI:57309"/>
        <dbReference type="EC" id="4.1.1.37"/>
    </reaction>
</comment>
<comment type="pathway">
    <text>Porphyrin-containing compound metabolism; protoporphyrin-IX biosynthesis; coproporphyrinogen-III from 5-aminolevulinate: step 4/4.</text>
</comment>
<comment type="subunit">
    <text evidence="3">Homodimer.</text>
</comment>
<comment type="subcellular location">
    <subcellularLocation>
        <location>Plastid</location>
        <location>Chloroplast</location>
    </subcellularLocation>
</comment>
<comment type="similarity">
    <text evidence="4">Belongs to the uroporphyrinogen decarboxylase family.</text>
</comment>